<keyword id="KW-0227">DNA damage</keyword>
<keyword id="KW-0234">DNA repair</keyword>
<keyword id="KW-0235">DNA replication</keyword>
<keyword id="KW-0436">Ligase</keyword>
<keyword id="KW-0460">Magnesium</keyword>
<keyword id="KW-0464">Manganese</keyword>
<keyword id="KW-0479">Metal-binding</keyword>
<keyword id="KW-0520">NAD</keyword>
<keyword id="KW-0862">Zinc</keyword>
<name>DNLJ_PSEAB</name>
<sequence>MTDTQAAAERIAQLRTELDTHNYRYYVLDEPSIPDAEYDRLFRELQALETEYPQLLTPDSPTQRVSGTPASAFGEVRHEIPMLSLGNAFEEQDLLDFDRRVREGLADLLPGGDLLGGGAEVEYSCEPKLDGLAVSLLYERGQLVRGATRGDGSTGEDITSNVRTIRNVPLKLHGEGWPEILEVRGEVFMSKAGFEALNAKAVETGGKTFANPRNAAAGSLRQLDSKITASRPLEFCAYGFGQVSGTLPDTQVGILEAFRGWGIPISRELRLVKGAQACRDYYDDIGRRRDALAYEIDGVVFKVNRIAFQRELGFRAREPRWAIAHKFPAREELTELLGVEFQVGRTGAVTPVARLKPVQVAGVTVSNATLHNMDEVARLGLRIGDTVVIRRAGDVIPQVMQVVLERRPADAQAIEVPEHCPVCGSAVERTQLVKRSKGKESISEGAIYRCVGRLSCQAQLKQAIIHFVSRRAMDIDGLGDKIVEQLVDRGLVASPADLYTLTYEQVFELEGFAELSTNNLLAAIADSRKPSLARFIFALGIPDVGEETAKLLARSLGSLERIGKALPEVLTYLPDVGAEVAYEIHNFFADEHNRQVIAQLRDAEHGVQLQEEGEVAAEFAACASLAGFIDKLNIPFIAATGAEKLASRFGSLDGIIRADWLDLRQVERLPERAAKSLRDFFDEPANVQRALAIEAQLREFGMHWQSERKAVEGLPLAGQTWVLTGTLEAMSRDVAKDKLEGLGAKVAGSVSAKTHCVVAGPGAGSKLAKANELGVKVLDEDGLLKLFDEHGVAR</sequence>
<evidence type="ECO:0000255" key="1">
    <source>
        <dbReference type="HAMAP-Rule" id="MF_01588"/>
    </source>
</evidence>
<feature type="chain" id="PRO_0000313374" description="DNA ligase">
    <location>
        <begin position="1"/>
        <end position="794"/>
    </location>
</feature>
<feature type="domain" description="BRCT" evidence="1">
    <location>
        <begin position="711"/>
        <end position="794"/>
    </location>
</feature>
<feature type="active site" description="N6-AMP-lysine intermediate" evidence="1">
    <location>
        <position position="128"/>
    </location>
</feature>
<feature type="binding site" evidence="1">
    <location>
        <begin position="35"/>
        <end position="39"/>
    </location>
    <ligand>
        <name>NAD(+)</name>
        <dbReference type="ChEBI" id="CHEBI:57540"/>
    </ligand>
</feature>
<feature type="binding site" evidence="1">
    <location>
        <begin position="84"/>
        <end position="85"/>
    </location>
    <ligand>
        <name>NAD(+)</name>
        <dbReference type="ChEBI" id="CHEBI:57540"/>
    </ligand>
</feature>
<feature type="binding site" evidence="1">
    <location>
        <position position="126"/>
    </location>
    <ligand>
        <name>NAD(+)</name>
        <dbReference type="ChEBI" id="CHEBI:57540"/>
    </ligand>
</feature>
<feature type="binding site" evidence="1">
    <location>
        <position position="149"/>
    </location>
    <ligand>
        <name>NAD(+)</name>
        <dbReference type="ChEBI" id="CHEBI:57540"/>
    </ligand>
</feature>
<feature type="binding site" evidence="1">
    <location>
        <position position="186"/>
    </location>
    <ligand>
        <name>NAD(+)</name>
        <dbReference type="ChEBI" id="CHEBI:57540"/>
    </ligand>
</feature>
<feature type="binding site" evidence="1">
    <location>
        <position position="302"/>
    </location>
    <ligand>
        <name>NAD(+)</name>
        <dbReference type="ChEBI" id="CHEBI:57540"/>
    </ligand>
</feature>
<feature type="binding site" evidence="1">
    <location>
        <position position="326"/>
    </location>
    <ligand>
        <name>NAD(+)</name>
        <dbReference type="ChEBI" id="CHEBI:57540"/>
    </ligand>
</feature>
<feature type="binding site" evidence="1">
    <location>
        <position position="420"/>
    </location>
    <ligand>
        <name>Zn(2+)</name>
        <dbReference type="ChEBI" id="CHEBI:29105"/>
    </ligand>
</feature>
<feature type="binding site" evidence="1">
    <location>
        <position position="423"/>
    </location>
    <ligand>
        <name>Zn(2+)</name>
        <dbReference type="ChEBI" id="CHEBI:29105"/>
    </ligand>
</feature>
<feature type="binding site" evidence="1">
    <location>
        <position position="450"/>
    </location>
    <ligand>
        <name>Zn(2+)</name>
        <dbReference type="ChEBI" id="CHEBI:29105"/>
    </ligand>
</feature>
<feature type="binding site" evidence="1">
    <location>
        <position position="456"/>
    </location>
    <ligand>
        <name>Zn(2+)</name>
        <dbReference type="ChEBI" id="CHEBI:29105"/>
    </ligand>
</feature>
<dbReference type="EC" id="6.5.1.2" evidence="1"/>
<dbReference type="EMBL" id="CP000438">
    <property type="protein sequence ID" value="ABJ10709.1"/>
    <property type="molecule type" value="Genomic_DNA"/>
</dbReference>
<dbReference type="RefSeq" id="WP_003140219.1">
    <property type="nucleotide sequence ID" value="NZ_CP034244.1"/>
</dbReference>
<dbReference type="SMR" id="Q02K12"/>
<dbReference type="KEGG" id="pau:PA14_44660"/>
<dbReference type="PseudoCAP" id="PA14_44660"/>
<dbReference type="HOGENOM" id="CLU_007764_2_1_6"/>
<dbReference type="BioCyc" id="PAER208963:G1G74-3753-MONOMER"/>
<dbReference type="Proteomes" id="UP000000653">
    <property type="component" value="Chromosome"/>
</dbReference>
<dbReference type="GO" id="GO:0005829">
    <property type="term" value="C:cytosol"/>
    <property type="evidence" value="ECO:0007669"/>
    <property type="project" value="TreeGrafter"/>
</dbReference>
<dbReference type="GO" id="GO:0003911">
    <property type="term" value="F:DNA ligase (NAD+) activity"/>
    <property type="evidence" value="ECO:0007669"/>
    <property type="project" value="UniProtKB-UniRule"/>
</dbReference>
<dbReference type="GO" id="GO:0046872">
    <property type="term" value="F:metal ion binding"/>
    <property type="evidence" value="ECO:0007669"/>
    <property type="project" value="UniProtKB-KW"/>
</dbReference>
<dbReference type="GO" id="GO:0006281">
    <property type="term" value="P:DNA repair"/>
    <property type="evidence" value="ECO:0007669"/>
    <property type="project" value="UniProtKB-KW"/>
</dbReference>
<dbReference type="GO" id="GO:0006260">
    <property type="term" value="P:DNA replication"/>
    <property type="evidence" value="ECO:0007669"/>
    <property type="project" value="UniProtKB-KW"/>
</dbReference>
<dbReference type="CDD" id="cd17748">
    <property type="entry name" value="BRCT_DNA_ligase_like"/>
    <property type="match status" value="1"/>
</dbReference>
<dbReference type="CDD" id="cd00114">
    <property type="entry name" value="LIGANc"/>
    <property type="match status" value="1"/>
</dbReference>
<dbReference type="FunFam" id="1.10.150.20:FF:000006">
    <property type="entry name" value="DNA ligase"/>
    <property type="match status" value="1"/>
</dbReference>
<dbReference type="FunFam" id="1.10.150.20:FF:000007">
    <property type="entry name" value="DNA ligase"/>
    <property type="match status" value="1"/>
</dbReference>
<dbReference type="FunFam" id="1.10.287.610:FF:000002">
    <property type="entry name" value="DNA ligase"/>
    <property type="match status" value="1"/>
</dbReference>
<dbReference type="FunFam" id="2.40.50.140:FF:000012">
    <property type="entry name" value="DNA ligase"/>
    <property type="match status" value="1"/>
</dbReference>
<dbReference type="FunFam" id="3.30.470.30:FF:000001">
    <property type="entry name" value="DNA ligase"/>
    <property type="match status" value="1"/>
</dbReference>
<dbReference type="FunFam" id="3.40.50.10190:FF:000069">
    <property type="entry name" value="DNA ligase"/>
    <property type="match status" value="1"/>
</dbReference>
<dbReference type="Gene3D" id="6.20.10.30">
    <property type="match status" value="1"/>
</dbReference>
<dbReference type="Gene3D" id="1.10.150.20">
    <property type="entry name" value="5' to 3' exonuclease, C-terminal subdomain"/>
    <property type="match status" value="3"/>
</dbReference>
<dbReference type="Gene3D" id="3.40.50.10190">
    <property type="entry name" value="BRCT domain"/>
    <property type="match status" value="1"/>
</dbReference>
<dbReference type="Gene3D" id="3.30.470.30">
    <property type="entry name" value="DNA ligase/mRNA capping enzyme"/>
    <property type="match status" value="1"/>
</dbReference>
<dbReference type="Gene3D" id="1.10.287.610">
    <property type="entry name" value="Helix hairpin bin"/>
    <property type="match status" value="1"/>
</dbReference>
<dbReference type="Gene3D" id="2.40.50.140">
    <property type="entry name" value="Nucleic acid-binding proteins"/>
    <property type="match status" value="1"/>
</dbReference>
<dbReference type="HAMAP" id="MF_01588">
    <property type="entry name" value="DNA_ligase_A"/>
    <property type="match status" value="1"/>
</dbReference>
<dbReference type="InterPro" id="IPR001357">
    <property type="entry name" value="BRCT_dom"/>
</dbReference>
<dbReference type="InterPro" id="IPR036420">
    <property type="entry name" value="BRCT_dom_sf"/>
</dbReference>
<dbReference type="InterPro" id="IPR041663">
    <property type="entry name" value="DisA/LigA_HHH"/>
</dbReference>
<dbReference type="InterPro" id="IPR001679">
    <property type="entry name" value="DNA_ligase"/>
</dbReference>
<dbReference type="InterPro" id="IPR018239">
    <property type="entry name" value="DNA_ligase_AS"/>
</dbReference>
<dbReference type="InterPro" id="IPR033136">
    <property type="entry name" value="DNA_ligase_CS"/>
</dbReference>
<dbReference type="InterPro" id="IPR013839">
    <property type="entry name" value="DNAligase_adenylation"/>
</dbReference>
<dbReference type="InterPro" id="IPR013840">
    <property type="entry name" value="DNAligase_N"/>
</dbReference>
<dbReference type="InterPro" id="IPR012340">
    <property type="entry name" value="NA-bd_OB-fold"/>
</dbReference>
<dbReference type="InterPro" id="IPR004150">
    <property type="entry name" value="NAD_DNA_ligase_OB"/>
</dbReference>
<dbReference type="InterPro" id="IPR010994">
    <property type="entry name" value="RuvA_2-like"/>
</dbReference>
<dbReference type="InterPro" id="IPR004149">
    <property type="entry name" value="Znf_DNAligase_C4"/>
</dbReference>
<dbReference type="NCBIfam" id="TIGR00575">
    <property type="entry name" value="dnlj"/>
    <property type="match status" value="1"/>
</dbReference>
<dbReference type="NCBIfam" id="NF005932">
    <property type="entry name" value="PRK07956.1"/>
    <property type="match status" value="1"/>
</dbReference>
<dbReference type="PANTHER" id="PTHR23389">
    <property type="entry name" value="CHROMOSOME TRANSMISSION FIDELITY FACTOR 18"/>
    <property type="match status" value="1"/>
</dbReference>
<dbReference type="PANTHER" id="PTHR23389:SF9">
    <property type="entry name" value="DNA LIGASE"/>
    <property type="match status" value="1"/>
</dbReference>
<dbReference type="Pfam" id="PF00533">
    <property type="entry name" value="BRCT"/>
    <property type="match status" value="1"/>
</dbReference>
<dbReference type="Pfam" id="PF01653">
    <property type="entry name" value="DNA_ligase_aden"/>
    <property type="match status" value="1"/>
</dbReference>
<dbReference type="Pfam" id="PF03120">
    <property type="entry name" value="DNA_ligase_OB"/>
    <property type="match status" value="1"/>
</dbReference>
<dbReference type="Pfam" id="PF03119">
    <property type="entry name" value="DNA_ligase_ZBD"/>
    <property type="match status" value="1"/>
</dbReference>
<dbReference type="Pfam" id="PF12826">
    <property type="entry name" value="HHH_2"/>
    <property type="match status" value="2"/>
</dbReference>
<dbReference type="Pfam" id="PF22745">
    <property type="entry name" value="Nlig-Ia"/>
    <property type="match status" value="1"/>
</dbReference>
<dbReference type="PIRSF" id="PIRSF001604">
    <property type="entry name" value="LigA"/>
    <property type="match status" value="1"/>
</dbReference>
<dbReference type="SMART" id="SM00292">
    <property type="entry name" value="BRCT"/>
    <property type="match status" value="1"/>
</dbReference>
<dbReference type="SMART" id="SM00532">
    <property type="entry name" value="LIGANc"/>
    <property type="match status" value="1"/>
</dbReference>
<dbReference type="SUPFAM" id="SSF52113">
    <property type="entry name" value="BRCT domain"/>
    <property type="match status" value="1"/>
</dbReference>
<dbReference type="SUPFAM" id="SSF56091">
    <property type="entry name" value="DNA ligase/mRNA capping enzyme, catalytic domain"/>
    <property type="match status" value="1"/>
</dbReference>
<dbReference type="SUPFAM" id="SSF50249">
    <property type="entry name" value="Nucleic acid-binding proteins"/>
    <property type="match status" value="1"/>
</dbReference>
<dbReference type="SUPFAM" id="SSF47781">
    <property type="entry name" value="RuvA domain 2-like"/>
    <property type="match status" value="2"/>
</dbReference>
<dbReference type="PROSITE" id="PS50172">
    <property type="entry name" value="BRCT"/>
    <property type="match status" value="1"/>
</dbReference>
<dbReference type="PROSITE" id="PS01055">
    <property type="entry name" value="DNA_LIGASE_N1"/>
    <property type="match status" value="1"/>
</dbReference>
<dbReference type="PROSITE" id="PS01056">
    <property type="entry name" value="DNA_LIGASE_N2"/>
    <property type="match status" value="1"/>
</dbReference>
<gene>
    <name evidence="1" type="primary">ligA</name>
    <name type="ordered locus">PA14_44660</name>
</gene>
<proteinExistence type="inferred from homology"/>
<reference key="1">
    <citation type="journal article" date="2006" name="Genome Biol.">
        <title>Genomic analysis reveals that Pseudomonas aeruginosa virulence is combinatorial.</title>
        <authorList>
            <person name="Lee D.G."/>
            <person name="Urbach J.M."/>
            <person name="Wu G."/>
            <person name="Liberati N.T."/>
            <person name="Feinbaum R.L."/>
            <person name="Miyata S."/>
            <person name="Diggins L.T."/>
            <person name="He J."/>
            <person name="Saucier M."/>
            <person name="Deziel E."/>
            <person name="Friedman L."/>
            <person name="Li L."/>
            <person name="Grills G."/>
            <person name="Montgomery K."/>
            <person name="Kucherlapati R."/>
            <person name="Rahme L.G."/>
            <person name="Ausubel F.M."/>
        </authorList>
    </citation>
    <scope>NUCLEOTIDE SEQUENCE [LARGE SCALE GENOMIC DNA]</scope>
    <source>
        <strain>UCBPP-PA14</strain>
    </source>
</reference>
<organism>
    <name type="scientific">Pseudomonas aeruginosa (strain UCBPP-PA14)</name>
    <dbReference type="NCBI Taxonomy" id="208963"/>
    <lineage>
        <taxon>Bacteria</taxon>
        <taxon>Pseudomonadati</taxon>
        <taxon>Pseudomonadota</taxon>
        <taxon>Gammaproteobacteria</taxon>
        <taxon>Pseudomonadales</taxon>
        <taxon>Pseudomonadaceae</taxon>
        <taxon>Pseudomonas</taxon>
    </lineage>
</organism>
<protein>
    <recommendedName>
        <fullName evidence="1">DNA ligase</fullName>
        <ecNumber evidence="1">6.5.1.2</ecNumber>
    </recommendedName>
    <alternativeName>
        <fullName evidence="1">Polydeoxyribonucleotide synthase [NAD(+)]</fullName>
    </alternativeName>
</protein>
<comment type="function">
    <text evidence="1">DNA ligase that catalyzes the formation of phosphodiester linkages between 5'-phosphoryl and 3'-hydroxyl groups in double-stranded DNA using NAD as a coenzyme and as the energy source for the reaction. It is essential for DNA replication and repair of damaged DNA.</text>
</comment>
<comment type="catalytic activity">
    <reaction evidence="1">
        <text>NAD(+) + (deoxyribonucleotide)n-3'-hydroxyl + 5'-phospho-(deoxyribonucleotide)m = (deoxyribonucleotide)n+m + AMP + beta-nicotinamide D-nucleotide.</text>
        <dbReference type="EC" id="6.5.1.2"/>
    </reaction>
</comment>
<comment type="cofactor">
    <cofactor evidence="1">
        <name>Mg(2+)</name>
        <dbReference type="ChEBI" id="CHEBI:18420"/>
    </cofactor>
    <cofactor evidence="1">
        <name>Mn(2+)</name>
        <dbReference type="ChEBI" id="CHEBI:29035"/>
    </cofactor>
</comment>
<comment type="similarity">
    <text evidence="1">Belongs to the NAD-dependent DNA ligase family. LigA subfamily.</text>
</comment>
<accession>Q02K12</accession>